<sequence>MKVIKTLSIINFFIFVTFNIKNESKYSNTFINNAYNMSIRRSMAESKPPTGTGASGSAGSGAGASGSAGSGDGAVASARNGANPGADAEGSSSTPATTTTTTTTTTTTTTNDAEASTSTSSENPNHNNAETNPKGKGEVQKSNQANKETQNNSNVQQDSQTKSNVPPTQDADTKSPTAQPEQAENSAPTAEQTESPELQSAPENKGTGQHGHMHGSRNNHPQNTSDSQKECTDGNKENCGAVTSLLSNSSNIASINKFVVLISAKLVLSFAIFI</sequence>
<organism>
    <name type="scientific">Plasmodium falciparum (isolate kf1916)</name>
    <dbReference type="NCBI Taxonomy" id="57269"/>
    <lineage>
        <taxon>Eukaryota</taxon>
        <taxon>Sar</taxon>
        <taxon>Alveolata</taxon>
        <taxon>Apicomplexa</taxon>
        <taxon>Aconoidasida</taxon>
        <taxon>Haemosporida</taxon>
        <taxon>Plasmodiidae</taxon>
        <taxon>Plasmodium</taxon>
        <taxon>Plasmodium (Laverania)</taxon>
    </lineage>
</organism>
<gene>
    <name evidence="3" type="primary">MSP2</name>
    <name evidence="7" type="synonym">MSA2</name>
</gene>
<proteinExistence type="inferred from homology"/>
<accession>P50497</accession>
<evidence type="ECO:0000250" key="1">
    <source>
        <dbReference type="UniProtKB" id="P19260"/>
    </source>
</evidence>
<evidence type="ECO:0000250" key="2">
    <source>
        <dbReference type="UniProtKB" id="P19599"/>
    </source>
</evidence>
<evidence type="ECO:0000250" key="3">
    <source>
        <dbReference type="UniProtKB" id="P50498"/>
    </source>
</evidence>
<evidence type="ECO:0000255" key="4"/>
<evidence type="ECO:0000256" key="5">
    <source>
        <dbReference type="SAM" id="MobiDB-lite"/>
    </source>
</evidence>
<evidence type="ECO:0000269" key="6">
    <source>
    </source>
</evidence>
<evidence type="ECO:0000303" key="7">
    <source>
    </source>
</evidence>
<feature type="signal peptide" evidence="4">
    <location>
        <begin position="1"/>
        <end position="20"/>
    </location>
</feature>
<feature type="chain" id="PRO_0000024582" description="Merozoite surface protein 2">
    <location>
        <begin position="21"/>
        <end position="248"/>
    </location>
</feature>
<feature type="propeptide" id="PRO_0000024583" description="Removed in mature form" evidence="1">
    <location>
        <begin position="249"/>
        <end position="274"/>
    </location>
</feature>
<feature type="repeat" description="1" evidence="6">
    <location>
        <begin position="53"/>
        <end position="62"/>
    </location>
</feature>
<feature type="repeat" description="2" evidence="6">
    <location>
        <begin position="63"/>
        <end position="72"/>
    </location>
</feature>
<feature type="region of interest" description="Disordered" evidence="5">
    <location>
        <begin position="43"/>
        <end position="234"/>
    </location>
</feature>
<feature type="region of interest" description="Polymorphic region" evidence="6">
    <location>
        <begin position="44"/>
        <end position="200"/>
    </location>
</feature>
<feature type="region of interest" description="2 X 10 AA tandem repeats of G-A-S-G-S-A-G-S-G-[AD]" evidence="6">
    <location>
        <begin position="53"/>
        <end position="72"/>
    </location>
</feature>
<feature type="compositionally biased region" description="Gly residues" evidence="5">
    <location>
        <begin position="53"/>
        <end position="72"/>
    </location>
</feature>
<feature type="compositionally biased region" description="Low complexity" evidence="5">
    <location>
        <begin position="91"/>
        <end position="121"/>
    </location>
</feature>
<feature type="compositionally biased region" description="Polar residues" evidence="5">
    <location>
        <begin position="122"/>
        <end position="131"/>
    </location>
</feature>
<feature type="compositionally biased region" description="Polar residues" evidence="5">
    <location>
        <begin position="140"/>
        <end position="167"/>
    </location>
</feature>
<feature type="compositionally biased region" description="Polar residues" evidence="5">
    <location>
        <begin position="174"/>
        <end position="202"/>
    </location>
</feature>
<feature type="lipid moiety-binding region" description="GPI-anchor amidated asparagine" evidence="1">
    <location>
        <position position="248"/>
    </location>
</feature>
<feature type="glycosylation site" description="N-linked (GlcNAc...) asparagine" evidence="4">
    <location>
        <position position="22"/>
    </location>
</feature>
<feature type="glycosylation site" description="N-linked (GlcNAc...) asparagine" evidence="4">
    <location>
        <position position="36"/>
    </location>
</feature>
<feature type="glycosylation site" description="N-linked (GlcNAc...) asparagine" evidence="4">
    <location>
        <position position="151"/>
    </location>
</feature>
<feature type="glycosylation site" description="N-linked (GlcNAc...) asparagine" evidence="4">
    <location>
        <position position="223"/>
    </location>
</feature>
<feature type="glycosylation site" description="N-linked (GlcNAc...) asparagine" evidence="4">
    <location>
        <position position="248"/>
    </location>
</feature>
<feature type="disulfide bond" evidence="2">
    <location>
        <begin position="231"/>
        <end position="239"/>
    </location>
</feature>
<keyword id="KW-1003">Cell membrane</keyword>
<keyword id="KW-1015">Disulfide bond</keyword>
<keyword id="KW-0325">Glycoprotein</keyword>
<keyword id="KW-0336">GPI-anchor</keyword>
<keyword id="KW-0449">Lipoprotein</keyword>
<keyword id="KW-0461">Malaria</keyword>
<keyword id="KW-0472">Membrane</keyword>
<keyword id="KW-0477">Merozoite</keyword>
<keyword id="KW-0677">Repeat</keyword>
<keyword id="KW-0732">Signal</keyword>
<reference key="1">
    <citation type="journal article" date="1992" name="Mol. Biochem. Parasitol.">
        <title>Two novel alleles within subfamilies of the merozoite surface antigen 2 (MSA-2) of Plasmodium falciparum.</title>
        <authorList>
            <person name="Marshall V.M."/>
            <person name="Coppel R.L."/>
            <person name="Anders R.F."/>
            <person name="Kemp D.J."/>
        </authorList>
    </citation>
    <scope>NUCLEOTIDE SEQUENCE [GENOMIC DNA]</scope>
    <scope>POLYMORPHISM</scope>
    <scope>REPEATS</scope>
</reference>
<dbReference type="EMBL" id="M73810">
    <property type="protein sequence ID" value="AAA29698.1"/>
    <property type="molecule type" value="Genomic_DNA"/>
</dbReference>
<dbReference type="PIR" id="A45632">
    <property type="entry name" value="A45632"/>
</dbReference>
<dbReference type="BMRB" id="P50497"/>
<dbReference type="GlyCosmos" id="P50497">
    <property type="glycosylation" value="5 sites, No reported glycans"/>
</dbReference>
<dbReference type="GO" id="GO:0005886">
    <property type="term" value="C:plasma membrane"/>
    <property type="evidence" value="ECO:0007669"/>
    <property type="project" value="UniProtKB-SubCell"/>
</dbReference>
<dbReference type="GO" id="GO:0098552">
    <property type="term" value="C:side of membrane"/>
    <property type="evidence" value="ECO:0007669"/>
    <property type="project" value="UniProtKB-KW"/>
</dbReference>
<dbReference type="GO" id="GO:0007155">
    <property type="term" value="P:cell adhesion"/>
    <property type="evidence" value="ECO:0007669"/>
    <property type="project" value="InterPro"/>
</dbReference>
<dbReference type="InterPro" id="IPR001136">
    <property type="entry name" value="MSA2"/>
</dbReference>
<dbReference type="Pfam" id="PF00985">
    <property type="entry name" value="MSA_2"/>
    <property type="match status" value="1"/>
</dbReference>
<dbReference type="PIRSF" id="PIRSF003575">
    <property type="entry name" value="MSA_2"/>
    <property type="match status" value="1"/>
</dbReference>
<name>MSA2_PLAF6</name>
<comment type="function">
    <text evidence="3">May play a role in the merozoite attachment to the erythrocyte.</text>
</comment>
<comment type="subcellular location">
    <subcellularLocation>
        <location evidence="3">Cell membrane</location>
        <topology evidence="1">Lipid-anchor</topology>
        <topology evidence="1">GPI-anchor</topology>
    </subcellularLocation>
    <text evidence="3">During host erythrocyte invasion by merozoites, carried into invaded erythrocytes where it is rapidly degraded.</text>
</comment>
<comment type="domain">
    <text evidence="3">The N-terminal region appears to be involved in lipid binding.</text>
</comment>
<comment type="polymorphism">
    <text evidence="6">The sequence varies across Plasmodium strains (PubMed:1542312). All variants share conserved N- and C-terminal regions; however, they belong to two allelic families, represented by 3D7 strain and FC27 strain sequences respectively, distinguished by tandem repeats and dimorphic flanking sequences within the central region of the protein (PubMed:1542312).</text>
</comment>
<protein>
    <recommendedName>
        <fullName evidence="3">Merozoite surface protein 2</fullName>
    </recommendedName>
    <alternativeName>
        <fullName evidence="7">Merozoite surface antigen 2</fullName>
        <shortName evidence="7">MSA-2</shortName>
    </alternativeName>
</protein>